<organism>
    <name type="scientific">Bacillus cereus (strain ATCC 10987 / NRS 248)</name>
    <dbReference type="NCBI Taxonomy" id="222523"/>
    <lineage>
        <taxon>Bacteria</taxon>
        <taxon>Bacillati</taxon>
        <taxon>Bacillota</taxon>
        <taxon>Bacilli</taxon>
        <taxon>Bacillales</taxon>
        <taxon>Bacillaceae</taxon>
        <taxon>Bacillus</taxon>
        <taxon>Bacillus cereus group</taxon>
    </lineage>
</organism>
<comment type="catalytic activity">
    <reaction evidence="1">
        <text>L-aspartate + NH4(+) + ATP = L-asparagine + AMP + diphosphate + H(+)</text>
        <dbReference type="Rhea" id="RHEA:11372"/>
        <dbReference type="ChEBI" id="CHEBI:15378"/>
        <dbReference type="ChEBI" id="CHEBI:28938"/>
        <dbReference type="ChEBI" id="CHEBI:29991"/>
        <dbReference type="ChEBI" id="CHEBI:30616"/>
        <dbReference type="ChEBI" id="CHEBI:33019"/>
        <dbReference type="ChEBI" id="CHEBI:58048"/>
        <dbReference type="ChEBI" id="CHEBI:456215"/>
        <dbReference type="EC" id="6.3.1.1"/>
    </reaction>
</comment>
<comment type="pathway">
    <text evidence="1">Amino-acid biosynthesis; L-asparagine biosynthesis; L-asparagine from L-aspartate (ammonia route): step 1/1.</text>
</comment>
<comment type="subcellular location">
    <subcellularLocation>
        <location evidence="1">Cytoplasm</location>
    </subcellularLocation>
</comment>
<comment type="similarity">
    <text evidence="1">Belongs to the class-II aminoacyl-tRNA synthetase family. AsnA subfamily.</text>
</comment>
<gene>
    <name evidence="1" type="primary">asnA</name>
    <name type="ordered locus">BCE_1880</name>
</gene>
<name>ASNA_BACC1</name>
<sequence>MYQSLMTVRETQIAIKEVKTFFEDQLAKRLELFRVSAPLFVTKRSGLNDHLNGVERPIEFDMLHSGEELEIVHSLAKWKRFALHEYGYEAGEGLYTNMNAIRRDEELDATHSIYVDQWDWEKIVQKEWRTVDYLQKTVLTIYGIFKDLEDHLFEKYPFLGKYLPEEIVFVTSQELEDKYPELTPKDREHAIAKEHGAVFIIGIGDALRSGEKHDGRAADYDDWKLNGDILFWHPVLQSSFELSSMGIRVDSKSLDEQLTKTGEDFKREYDFHKGILEDVLPLTIGGGIGQSRMCMYFLRKAHIGEVQSSVWPDDLREACKKENIHLF</sequence>
<evidence type="ECO:0000255" key="1">
    <source>
        <dbReference type="HAMAP-Rule" id="MF_00555"/>
    </source>
</evidence>
<accession>P61397</accession>
<protein>
    <recommendedName>
        <fullName evidence="1">Aspartate--ammonia ligase</fullName>
        <ecNumber evidence="1">6.3.1.1</ecNumber>
    </recommendedName>
    <alternativeName>
        <fullName evidence="1">Asparagine synthetase A</fullName>
    </alternativeName>
</protein>
<keyword id="KW-0028">Amino-acid biosynthesis</keyword>
<keyword id="KW-0061">Asparagine biosynthesis</keyword>
<keyword id="KW-0067">ATP-binding</keyword>
<keyword id="KW-0963">Cytoplasm</keyword>
<keyword id="KW-0436">Ligase</keyword>
<keyword id="KW-0547">Nucleotide-binding</keyword>
<proteinExistence type="inferred from homology"/>
<feature type="chain" id="PRO_0000195868" description="Aspartate--ammonia ligase">
    <location>
        <begin position="1"/>
        <end position="327"/>
    </location>
</feature>
<reference key="1">
    <citation type="journal article" date="2004" name="Nucleic Acids Res.">
        <title>The genome sequence of Bacillus cereus ATCC 10987 reveals metabolic adaptations and a large plasmid related to Bacillus anthracis pXO1.</title>
        <authorList>
            <person name="Rasko D.A."/>
            <person name="Ravel J."/>
            <person name="Oekstad O.A."/>
            <person name="Helgason E."/>
            <person name="Cer R.Z."/>
            <person name="Jiang L."/>
            <person name="Shores K.A."/>
            <person name="Fouts D.E."/>
            <person name="Tourasse N.J."/>
            <person name="Angiuoli S.V."/>
            <person name="Kolonay J.F."/>
            <person name="Nelson W.C."/>
            <person name="Kolstoe A.-B."/>
            <person name="Fraser C.M."/>
            <person name="Read T.D."/>
        </authorList>
    </citation>
    <scope>NUCLEOTIDE SEQUENCE [LARGE SCALE GENOMIC DNA]</scope>
    <source>
        <strain>ATCC 10987 / NRS 248</strain>
    </source>
</reference>
<dbReference type="EC" id="6.3.1.1" evidence="1"/>
<dbReference type="EMBL" id="AE017194">
    <property type="protein sequence ID" value="AAS40804.1"/>
    <property type="molecule type" value="Genomic_DNA"/>
</dbReference>
<dbReference type="SMR" id="P61397"/>
<dbReference type="KEGG" id="bca:BCE_1880"/>
<dbReference type="HOGENOM" id="CLU_071543_0_0_9"/>
<dbReference type="UniPathway" id="UPA00134">
    <property type="reaction ID" value="UER00194"/>
</dbReference>
<dbReference type="Proteomes" id="UP000002527">
    <property type="component" value="Chromosome"/>
</dbReference>
<dbReference type="GO" id="GO:0005829">
    <property type="term" value="C:cytosol"/>
    <property type="evidence" value="ECO:0007669"/>
    <property type="project" value="TreeGrafter"/>
</dbReference>
<dbReference type="GO" id="GO:0004071">
    <property type="term" value="F:aspartate-ammonia ligase activity"/>
    <property type="evidence" value="ECO:0007669"/>
    <property type="project" value="UniProtKB-UniRule"/>
</dbReference>
<dbReference type="GO" id="GO:0005524">
    <property type="term" value="F:ATP binding"/>
    <property type="evidence" value="ECO:0007669"/>
    <property type="project" value="UniProtKB-UniRule"/>
</dbReference>
<dbReference type="GO" id="GO:0140096">
    <property type="term" value="F:catalytic activity, acting on a protein"/>
    <property type="evidence" value="ECO:0007669"/>
    <property type="project" value="UniProtKB-ARBA"/>
</dbReference>
<dbReference type="GO" id="GO:0016740">
    <property type="term" value="F:transferase activity"/>
    <property type="evidence" value="ECO:0007669"/>
    <property type="project" value="UniProtKB-ARBA"/>
</dbReference>
<dbReference type="GO" id="GO:0070981">
    <property type="term" value="P:L-asparagine biosynthetic process"/>
    <property type="evidence" value="ECO:0007669"/>
    <property type="project" value="UniProtKB-UniRule"/>
</dbReference>
<dbReference type="CDD" id="cd00645">
    <property type="entry name" value="AsnA"/>
    <property type="match status" value="1"/>
</dbReference>
<dbReference type="Gene3D" id="3.30.930.10">
    <property type="entry name" value="Bira Bifunctional Protein, Domain 2"/>
    <property type="match status" value="1"/>
</dbReference>
<dbReference type="HAMAP" id="MF_00555">
    <property type="entry name" value="AsnA"/>
    <property type="match status" value="1"/>
</dbReference>
<dbReference type="InterPro" id="IPR006195">
    <property type="entry name" value="aa-tRNA-synth_II"/>
</dbReference>
<dbReference type="InterPro" id="IPR045864">
    <property type="entry name" value="aa-tRNA-synth_II/BPL/LPL"/>
</dbReference>
<dbReference type="InterPro" id="IPR004618">
    <property type="entry name" value="AsnA"/>
</dbReference>
<dbReference type="NCBIfam" id="TIGR00669">
    <property type="entry name" value="asnA"/>
    <property type="match status" value="1"/>
</dbReference>
<dbReference type="PANTHER" id="PTHR30073">
    <property type="entry name" value="ASPARTATE--AMMONIA LIGASE"/>
    <property type="match status" value="1"/>
</dbReference>
<dbReference type="PANTHER" id="PTHR30073:SF5">
    <property type="entry name" value="ASPARTATE--AMMONIA LIGASE"/>
    <property type="match status" value="1"/>
</dbReference>
<dbReference type="Pfam" id="PF03590">
    <property type="entry name" value="AsnA"/>
    <property type="match status" value="1"/>
</dbReference>
<dbReference type="PIRSF" id="PIRSF001555">
    <property type="entry name" value="Asp_ammon_ligase"/>
    <property type="match status" value="1"/>
</dbReference>
<dbReference type="SUPFAM" id="SSF55681">
    <property type="entry name" value="Class II aaRS and biotin synthetases"/>
    <property type="match status" value="1"/>
</dbReference>
<dbReference type="PROSITE" id="PS50862">
    <property type="entry name" value="AA_TRNA_LIGASE_II"/>
    <property type="match status" value="1"/>
</dbReference>